<accession>Q91611</accession>
<comment type="function">
    <molecule>Desert hedgehog protein B</molecule>
    <text evidence="4">The C-terminal part of the desert hedgehog protein precursor displays an autoproteolysis and a cholesterol transferase activity (By similarity). Both activities result in the cleavage of the full-length protein into two parts (DhhN and DhhC) followed by the covalent attachment of a cholesterol moiety to the C-terminal of the newly generated DhhN (By similarity). Both activities occur in the endoplasmic reticulum (By similarity).</text>
</comment>
<comment type="function">
    <molecule>Desert hedgehog protein B N-product</molecule>
    <text evidence="1 4 6">The dually lipidated desert hedgehog protein N-product (DhhNp) is essential for a variety of patterning events during development (By similarity). Involved in the early induction and patterning of anterodorsal ectoderm, nervous system and somites. Induces ectopic cement gland formation in embryos (PubMed:7671800). Binds to the patched (PTCH1) receptor, which functions in association with smoothened (SMO), to activate the transcription of target genes (By similarity).</text>
</comment>
<comment type="catalytic activity">
    <molecule>Desert hedgehog protein B</molecule>
    <reaction evidence="4">
        <text>glycyl-L-cysteinyl-[protein] + cholesterol + H(+) = [protein]-C-terminal glycyl cholesterol ester + N-terminal L-cysteinyl-[protein]</text>
        <dbReference type="Rhea" id="RHEA:59504"/>
        <dbReference type="Rhea" id="RHEA-COMP:12707"/>
        <dbReference type="Rhea" id="RHEA-COMP:15369"/>
        <dbReference type="Rhea" id="RHEA-COMP:15374"/>
        <dbReference type="ChEBI" id="CHEBI:15378"/>
        <dbReference type="ChEBI" id="CHEBI:16113"/>
        <dbReference type="ChEBI" id="CHEBI:65250"/>
        <dbReference type="ChEBI" id="CHEBI:143135"/>
        <dbReference type="ChEBI" id="CHEBI:143140"/>
    </reaction>
    <physiologicalReaction direction="left-to-right" evidence="4">
        <dbReference type="Rhea" id="RHEA:59505"/>
    </physiologicalReaction>
</comment>
<comment type="subunit">
    <molecule>Desert hedgehog protein B N-product</molecule>
    <text evidence="3">Multimer.</text>
</comment>
<comment type="subunit">
    <text evidence="1">Interacts with BOC and CDON. Interacts with HHIP.</text>
</comment>
<comment type="subcellular location">
    <molecule>Desert hedgehog protein B N-product</molecule>
    <subcellularLocation>
        <location evidence="4">Cell membrane</location>
        <topology evidence="4">Lipid-anchor</topology>
    </subcellularLocation>
</comment>
<comment type="subcellular location">
    <molecule>Desert hedgehog protein B</molecule>
    <subcellularLocation>
        <location evidence="3">Endoplasmic reticulum membrane</location>
    </subcellularLocation>
    <subcellularLocation>
        <location evidence="3">Golgi apparatus membrane</location>
    </subcellularLocation>
    <subcellularLocation>
        <location evidence="1">Secreted</location>
    </subcellularLocation>
    <subcellularLocation>
        <location evidence="1">Cell membrane</location>
    </subcellularLocation>
    <text evidence="3">Co-localizes with HHAT in the ER and Golgi membrane.</text>
</comment>
<comment type="domain">
    <molecule>Desert hedgehog protein B N-product</molecule>
    <text evidence="1">Binds calcium and zinc ions; this stabilizes the protein fold and is essential for protein-protein interactions mediated by this domain.</text>
</comment>
<comment type="domain">
    <molecule>Desert hedgehog protein B</molecule>
    <text evidence="1">The C-terminal domain regulates the auto-processing and controls the juxtacrine signaling.</text>
</comment>
<comment type="PTM">
    <molecule>Desert hedgehog protein B</molecule>
    <text evidence="1 4">Partially autoproteolyzed (By similarity). The C-terminal domain displays an autoproteolysis activity and a cholesterol transferase activity (By similarity). Both activities result in the cleavage of the full-length protein and covalent attachment of a cholesterol moiety to the C-terminal of the newly generated N-terminal fragment (DhhN) (By similarity).</text>
</comment>
<comment type="PTM">
    <molecule>Desert hedgehog protein B N-product</molecule>
    <text evidence="4">N-palmitoylation by HHAT of DhhN is required for desert hedgehog protein N-product multimerization and full activity (By similarity).</text>
</comment>
<comment type="similarity">
    <text evidence="7">Belongs to the hedgehog family.</text>
</comment>
<organism>
    <name type="scientific">Xenopus laevis</name>
    <name type="common">African clawed frog</name>
    <dbReference type="NCBI Taxonomy" id="8355"/>
    <lineage>
        <taxon>Eukaryota</taxon>
        <taxon>Metazoa</taxon>
        <taxon>Chordata</taxon>
        <taxon>Craniata</taxon>
        <taxon>Vertebrata</taxon>
        <taxon>Euteleostomi</taxon>
        <taxon>Amphibia</taxon>
        <taxon>Batrachia</taxon>
        <taxon>Anura</taxon>
        <taxon>Pipoidea</taxon>
        <taxon>Pipidae</taxon>
        <taxon>Xenopodinae</taxon>
        <taxon>Xenopus</taxon>
        <taxon>Xenopus</taxon>
    </lineage>
</organism>
<gene>
    <name type="primary">dhh-b</name>
    <name type="synonym">hh4</name>
</gene>
<feature type="signal peptide" evidence="5">
    <location>
        <begin position="1"/>
        <end position="23"/>
    </location>
</feature>
<feature type="chain" id="PRO_0000013253" description="Desert hedgehog protein B">
    <location>
        <begin position="24"/>
        <end position="398"/>
    </location>
</feature>
<feature type="chain" id="PRO_0000013254" description="Desert hedgehog protein B N-product">
    <location>
        <begin position="24"/>
        <end position="199"/>
    </location>
</feature>
<feature type="binding site" evidence="1">
    <location>
        <position position="91"/>
    </location>
    <ligand>
        <name>Ca(2+)</name>
        <dbReference type="ChEBI" id="CHEBI:29108"/>
        <label>1</label>
    </ligand>
</feature>
<feature type="binding site" evidence="1">
    <location>
        <position position="92"/>
    </location>
    <ligand>
        <name>Ca(2+)</name>
        <dbReference type="ChEBI" id="CHEBI:29108"/>
        <label>1</label>
    </ligand>
</feature>
<feature type="binding site" evidence="1">
    <location>
        <position position="92"/>
    </location>
    <ligand>
        <name>Ca(2+)</name>
        <dbReference type="ChEBI" id="CHEBI:29108"/>
        <label>2</label>
    </ligand>
</feature>
<feature type="binding site" evidence="1">
    <location>
        <position position="97"/>
    </location>
    <ligand>
        <name>Ca(2+)</name>
        <dbReference type="ChEBI" id="CHEBI:29108"/>
        <label>1</label>
    </ligand>
</feature>
<feature type="binding site" evidence="1">
    <location>
        <position position="127"/>
    </location>
    <ligand>
        <name>Ca(2+)</name>
        <dbReference type="ChEBI" id="CHEBI:29108"/>
        <label>1</label>
    </ligand>
</feature>
<feature type="binding site" evidence="1">
    <location>
        <position position="128"/>
    </location>
    <ligand>
        <name>Ca(2+)</name>
        <dbReference type="ChEBI" id="CHEBI:29108"/>
        <label>1</label>
    </ligand>
</feature>
<feature type="binding site" evidence="1">
    <location>
        <position position="128"/>
    </location>
    <ligand>
        <name>Ca(2+)</name>
        <dbReference type="ChEBI" id="CHEBI:29108"/>
        <label>2</label>
    </ligand>
</feature>
<feature type="binding site" evidence="1">
    <location>
        <position position="131"/>
    </location>
    <ligand>
        <name>Ca(2+)</name>
        <dbReference type="ChEBI" id="CHEBI:29108"/>
        <label>2</label>
    </ligand>
</feature>
<feature type="binding site" evidence="1">
    <location>
        <position position="133"/>
    </location>
    <ligand>
        <name>Ca(2+)</name>
        <dbReference type="ChEBI" id="CHEBI:29108"/>
        <label>2</label>
    </ligand>
</feature>
<feature type="binding site" evidence="1">
    <location>
        <position position="142"/>
    </location>
    <ligand>
        <name>Zn(2+)</name>
        <dbReference type="ChEBI" id="CHEBI:29105"/>
    </ligand>
</feature>
<feature type="binding site" evidence="1">
    <location>
        <position position="149"/>
    </location>
    <ligand>
        <name>Zn(2+)</name>
        <dbReference type="ChEBI" id="CHEBI:29105"/>
    </ligand>
</feature>
<feature type="binding site" evidence="1">
    <location>
        <position position="184"/>
    </location>
    <ligand>
        <name>Zn(2+)</name>
        <dbReference type="ChEBI" id="CHEBI:29105"/>
    </ligand>
</feature>
<feature type="site" description="Cleavage; by autolysis" evidence="2">
    <location>
        <begin position="199"/>
        <end position="200"/>
    </location>
</feature>
<feature type="site" description="Involved in auto-cleavage" evidence="2">
    <location>
        <position position="269"/>
    </location>
</feature>
<feature type="site" description="Essential for auto-cleavage" evidence="2">
    <location>
        <position position="272"/>
    </location>
</feature>
<feature type="lipid moiety-binding region" description="N-palmitoyl cysteine" evidence="1">
    <location>
        <position position="24"/>
    </location>
</feature>
<feature type="lipid moiety-binding region" description="Cholesterol glycine ester" evidence="4">
    <location>
        <position position="199"/>
    </location>
</feature>
<sequence>MPAVRILILAACCCWLLLLPVRCCGPGRGPVGGRRRYMRRLVPLLYKQFVPNVPEKTLGASGKSEGKIRRGSERFIKLVPNYNPDIIFKDEENTGADRLMTERCKDRVNALAISVMNMWPGLKLRVTEGWDEDGHHAHDSLHYEGRALDITTSDRDRNKYGMLARLAVEAGFDWVYYESKAHIHVSVNTDNSLGVRSGGCFPGTAMVMMETGKKKPLSELKLGDTVFTTDETGLLIHSVVLLFLHRDPYKTATFVLIEAEGHPTKLLVTPNHLLFIKSSSSTGFQPTFAYRVQIGDLIQIYVNGTQVQSSKVVRVSVDEQTGVYAPMTEHGTLLVDGVLTSCYATVESHTLAHASLAPLRLFQGIASMLPDLHTSDGVHWYCHILYVLAKYVLWWDMP</sequence>
<name>DHHB_XENLA</name>
<reference key="1">
    <citation type="journal article" date="1995" name="Development">
        <title>Distinct expression and shared activities of members of the hedgehog gene family of Xenopus laevis.</title>
        <authorList>
            <person name="Ekker S.C."/>
            <person name="McGrew L.L."/>
            <person name="Lai C.-J."/>
            <person name="Lee J.J."/>
            <person name="von Kessler D.P."/>
            <person name="Moon R.T."/>
            <person name="Beachy P.A."/>
        </authorList>
    </citation>
    <scope>NUCLEOTIDE SEQUENCE [MRNA]</scope>
    <scope>FUNCTION</scope>
    <source>
        <tissue>Embryo</tissue>
    </source>
</reference>
<evidence type="ECO:0000250" key="1">
    <source>
        <dbReference type="UniProtKB" id="O43323"/>
    </source>
</evidence>
<evidence type="ECO:0000250" key="2">
    <source>
        <dbReference type="UniProtKB" id="Q02936"/>
    </source>
</evidence>
<evidence type="ECO:0000250" key="3">
    <source>
        <dbReference type="UniProtKB" id="Q15465"/>
    </source>
</evidence>
<evidence type="ECO:0000250" key="4">
    <source>
        <dbReference type="UniProtKB" id="Q62226"/>
    </source>
</evidence>
<evidence type="ECO:0000255" key="5"/>
<evidence type="ECO:0000269" key="6">
    <source>
    </source>
</evidence>
<evidence type="ECO:0000305" key="7"/>
<dbReference type="EC" id="3.1.-.-" evidence="4"/>
<dbReference type="EMBL" id="U26350">
    <property type="protein sequence ID" value="AAA85164.1"/>
    <property type="molecule type" value="mRNA"/>
</dbReference>
<dbReference type="RefSeq" id="NP_001079261.1">
    <property type="nucleotide sequence ID" value="NM_001085792.1"/>
</dbReference>
<dbReference type="SMR" id="Q91611"/>
<dbReference type="MEROPS" id="C46.004"/>
<dbReference type="GeneID" id="378539"/>
<dbReference type="KEGG" id="xla:378539"/>
<dbReference type="AGR" id="Xenbase:XB-GENE-6252656"/>
<dbReference type="CTD" id="378539"/>
<dbReference type="Xenbase" id="XB-GENE-6252656">
    <property type="gene designation" value="dhh.S"/>
</dbReference>
<dbReference type="OMA" id="EEHKGSY"/>
<dbReference type="OrthoDB" id="5212at2759"/>
<dbReference type="Proteomes" id="UP000186698">
    <property type="component" value="Chromosome 2S"/>
</dbReference>
<dbReference type="Bgee" id="378539">
    <property type="expression patterns" value="Expressed in camera-type eye and 8 other cell types or tissues"/>
</dbReference>
<dbReference type="GO" id="GO:0005789">
    <property type="term" value="C:endoplasmic reticulum membrane"/>
    <property type="evidence" value="ECO:0007669"/>
    <property type="project" value="UniProtKB-SubCell"/>
</dbReference>
<dbReference type="GO" id="GO:0005615">
    <property type="term" value="C:extracellular space"/>
    <property type="evidence" value="ECO:0000318"/>
    <property type="project" value="GO_Central"/>
</dbReference>
<dbReference type="GO" id="GO:0000139">
    <property type="term" value="C:Golgi membrane"/>
    <property type="evidence" value="ECO:0007669"/>
    <property type="project" value="UniProtKB-SubCell"/>
</dbReference>
<dbReference type="GO" id="GO:0005886">
    <property type="term" value="C:plasma membrane"/>
    <property type="evidence" value="ECO:0007669"/>
    <property type="project" value="UniProtKB-SubCell"/>
</dbReference>
<dbReference type="GO" id="GO:0005509">
    <property type="term" value="F:calcium ion binding"/>
    <property type="evidence" value="ECO:0000318"/>
    <property type="project" value="GO_Central"/>
</dbReference>
<dbReference type="GO" id="GO:0140853">
    <property type="term" value="F:cholesterol-protein transferase activity"/>
    <property type="evidence" value="ECO:0000250"/>
    <property type="project" value="UniProtKB"/>
</dbReference>
<dbReference type="GO" id="GO:0005113">
    <property type="term" value="F:patched binding"/>
    <property type="evidence" value="ECO:0000250"/>
    <property type="project" value="UniProtKB"/>
</dbReference>
<dbReference type="GO" id="GO:0008233">
    <property type="term" value="F:peptidase activity"/>
    <property type="evidence" value="ECO:0000250"/>
    <property type="project" value="UniProtKB"/>
</dbReference>
<dbReference type="GO" id="GO:0001708">
    <property type="term" value="P:cell fate specification"/>
    <property type="evidence" value="ECO:0000318"/>
    <property type="project" value="GO_Central"/>
</dbReference>
<dbReference type="GO" id="GO:0007267">
    <property type="term" value="P:cell-cell signaling"/>
    <property type="evidence" value="ECO:0007669"/>
    <property type="project" value="InterPro"/>
</dbReference>
<dbReference type="GO" id="GO:0045880">
    <property type="term" value="P:positive regulation of smoothened signaling pathway"/>
    <property type="evidence" value="ECO:0000250"/>
    <property type="project" value="UniProtKB"/>
</dbReference>
<dbReference type="GO" id="GO:0016540">
    <property type="term" value="P:protein autoprocessing"/>
    <property type="evidence" value="ECO:0007669"/>
    <property type="project" value="InterPro"/>
</dbReference>
<dbReference type="GO" id="GO:0010468">
    <property type="term" value="P:regulation of gene expression"/>
    <property type="evidence" value="ECO:0000318"/>
    <property type="project" value="GO_Central"/>
</dbReference>
<dbReference type="GO" id="GO:0097264">
    <property type="term" value="P:self proteolysis"/>
    <property type="evidence" value="ECO:0000250"/>
    <property type="project" value="UniProtKB"/>
</dbReference>
<dbReference type="GO" id="GO:0007224">
    <property type="term" value="P:smoothened signaling pathway"/>
    <property type="evidence" value="ECO:0000318"/>
    <property type="project" value="GO_Central"/>
</dbReference>
<dbReference type="CDD" id="cd00081">
    <property type="entry name" value="Hint"/>
    <property type="match status" value="1"/>
</dbReference>
<dbReference type="FunFam" id="2.170.16.10:FF:000002">
    <property type="entry name" value="Desert hedgehog"/>
    <property type="match status" value="1"/>
</dbReference>
<dbReference type="FunFam" id="3.30.1380.10:FF:000001">
    <property type="entry name" value="Indian hedgehog"/>
    <property type="match status" value="1"/>
</dbReference>
<dbReference type="Gene3D" id="3.30.1380.10">
    <property type="match status" value="1"/>
</dbReference>
<dbReference type="Gene3D" id="2.170.16.10">
    <property type="entry name" value="Hedgehog/Intein (Hint) domain"/>
    <property type="match status" value="1"/>
</dbReference>
<dbReference type="InterPro" id="IPR001657">
    <property type="entry name" value="Hedgehog"/>
</dbReference>
<dbReference type="InterPro" id="IPR001767">
    <property type="entry name" value="Hedgehog_Hint"/>
</dbReference>
<dbReference type="InterPro" id="IPR009045">
    <property type="entry name" value="Hedgehog_sig/DD-Pept_Zn-bd_sf"/>
</dbReference>
<dbReference type="InterPro" id="IPR050387">
    <property type="entry name" value="Hedgehog_Signaling"/>
</dbReference>
<dbReference type="InterPro" id="IPR000320">
    <property type="entry name" value="Hedgehog_signalling_dom"/>
</dbReference>
<dbReference type="InterPro" id="IPR003586">
    <property type="entry name" value="Hint_dom_C"/>
</dbReference>
<dbReference type="InterPro" id="IPR003587">
    <property type="entry name" value="Hint_dom_N"/>
</dbReference>
<dbReference type="InterPro" id="IPR036844">
    <property type="entry name" value="Hint_dom_sf"/>
</dbReference>
<dbReference type="PANTHER" id="PTHR11889:SF56">
    <property type="entry name" value="DESERT HEDGEHOG PROTEIN"/>
    <property type="match status" value="1"/>
</dbReference>
<dbReference type="PANTHER" id="PTHR11889">
    <property type="entry name" value="HEDGEHOG"/>
    <property type="match status" value="1"/>
</dbReference>
<dbReference type="Pfam" id="PF01085">
    <property type="entry name" value="HH_signal"/>
    <property type="match status" value="1"/>
</dbReference>
<dbReference type="Pfam" id="PF01079">
    <property type="entry name" value="Hint"/>
    <property type="match status" value="1"/>
</dbReference>
<dbReference type="PIRSF" id="PIRSF009400">
    <property type="entry name" value="Peptidase_C46"/>
    <property type="match status" value="1"/>
</dbReference>
<dbReference type="PRINTS" id="PR00632">
    <property type="entry name" value="SONICHHOG"/>
</dbReference>
<dbReference type="SMART" id="SM00305">
    <property type="entry name" value="HintC"/>
    <property type="match status" value="1"/>
</dbReference>
<dbReference type="SMART" id="SM00306">
    <property type="entry name" value="HintN"/>
    <property type="match status" value="1"/>
</dbReference>
<dbReference type="SUPFAM" id="SSF55166">
    <property type="entry name" value="Hedgehog/DD-peptidase"/>
    <property type="match status" value="1"/>
</dbReference>
<dbReference type="SUPFAM" id="SSF51294">
    <property type="entry name" value="Hedgehog/intein (Hint) domain"/>
    <property type="match status" value="1"/>
</dbReference>
<keyword id="KW-0068">Autocatalytic cleavage</keyword>
<keyword id="KW-0106">Calcium</keyword>
<keyword id="KW-1003">Cell membrane</keyword>
<keyword id="KW-0217">Developmental protein</keyword>
<keyword id="KW-0256">Endoplasmic reticulum</keyword>
<keyword id="KW-0333">Golgi apparatus</keyword>
<keyword id="KW-0378">Hydrolase</keyword>
<keyword id="KW-0449">Lipoprotein</keyword>
<keyword id="KW-0472">Membrane</keyword>
<keyword id="KW-0479">Metal-binding</keyword>
<keyword id="KW-0564">Palmitate</keyword>
<keyword id="KW-0645">Protease</keyword>
<keyword id="KW-1185">Reference proteome</keyword>
<keyword id="KW-0964">Secreted</keyword>
<keyword id="KW-0732">Signal</keyword>
<keyword id="KW-0808">Transferase</keyword>
<keyword id="KW-0862">Zinc</keyword>
<protein>
    <recommendedName>
        <fullName evidence="7">Desert hedgehog protein B</fullName>
        <ecNumber evidence="4">3.1.-.-</ecNumber>
    </recommendedName>
    <alternativeName>
        <fullName>Desert hedgehog protein 2</fullName>
        <shortName>DHH-2</shortName>
    </alternativeName>
    <alternativeName>
        <fullName>Hedgehog protein 4</fullName>
    </alternativeName>
    <alternativeName>
        <fullName>X-HH4</fullName>
    </alternativeName>
    <component>
        <recommendedName>
            <fullName>Desert hedgehog protein B N-product</fullName>
        </recommendedName>
    </component>
</protein>
<proteinExistence type="evidence at transcript level"/>